<organism>
    <name type="scientific">Arabidopsis thaliana</name>
    <name type="common">Mouse-ear cress</name>
    <dbReference type="NCBI Taxonomy" id="3702"/>
    <lineage>
        <taxon>Eukaryota</taxon>
        <taxon>Viridiplantae</taxon>
        <taxon>Streptophyta</taxon>
        <taxon>Embryophyta</taxon>
        <taxon>Tracheophyta</taxon>
        <taxon>Spermatophyta</taxon>
        <taxon>Magnoliopsida</taxon>
        <taxon>eudicotyledons</taxon>
        <taxon>Gunneridae</taxon>
        <taxon>Pentapetalae</taxon>
        <taxon>rosids</taxon>
        <taxon>malvids</taxon>
        <taxon>Brassicales</taxon>
        <taxon>Brassicaceae</taxon>
        <taxon>Camelineae</taxon>
        <taxon>Arabidopsis</taxon>
    </lineage>
</organism>
<comment type="function">
    <text evidence="3 5">Operates as a K(+)/H(+) antiporter that controls K(+) acquisition and homeostasis.</text>
</comment>
<comment type="subcellular location">
    <subcellularLocation>
        <location evidence="1">Membrane</location>
        <topology evidence="1">Multi-pass membrane protein</topology>
    </subcellularLocation>
</comment>
<comment type="tissue specificity">
    <text evidence="4">Predominantly expressed in epidermal and cortical cells of mature roots but also barely detected in leaves.</text>
</comment>
<comment type="induction">
    <text evidence="3">Up-regulated by NaCl, K(+) starvation and abscisic acid (ABA). Induced at acidic external pH.</text>
</comment>
<comment type="disruption phenotype">
    <text evidence="3">Decreased K(+) content in roots.</text>
</comment>
<comment type="miscellaneous">
    <text>Could complement the kha1 deletion phenotypes in S.cerevisiae.</text>
</comment>
<comment type="similarity">
    <text evidence="6">Belongs to the monovalent cation:proton antiporter 2 (CPA2) transporter (TC 2.A.37) family. CHX (TC 2.A.37.4) subfamily.</text>
</comment>
<name>CHX17_ARATH</name>
<gene>
    <name type="primary">CHX17</name>
    <name type="ordered locus">At4g23700</name>
    <name type="ORF">F9D16.170</name>
</gene>
<keyword id="KW-0050">Antiport</keyword>
<keyword id="KW-0406">Ion transport</keyword>
<keyword id="KW-0472">Membrane</keyword>
<keyword id="KW-0597">Phosphoprotein</keyword>
<keyword id="KW-0630">Potassium</keyword>
<keyword id="KW-0633">Potassium transport</keyword>
<keyword id="KW-1185">Reference proteome</keyword>
<keyword id="KW-0812">Transmembrane</keyword>
<keyword id="KW-1133">Transmembrane helix</keyword>
<keyword id="KW-0813">Transport</keyword>
<reference key="1">
    <citation type="journal article" date="2004" name="Plant Physiol.">
        <title>Expression patterns of a novel AtCHX gene family highlight potential roles in osmotic adjustment and K+ homeostasis in pollen development.</title>
        <authorList>
            <person name="Sze H."/>
            <person name="Padmanaban S."/>
            <person name="Cellier F."/>
            <person name="Honys D."/>
            <person name="Cheng N.-H."/>
            <person name="Bock K.W."/>
            <person name="Conejero G."/>
            <person name="Li X."/>
            <person name="Twell D."/>
            <person name="Ward J.M."/>
            <person name="Hirschi K.D."/>
        </authorList>
    </citation>
    <scope>NUCLEOTIDE SEQUENCE [MRNA]</scope>
    <scope>TISSUE SPECIFICITY</scope>
    <scope>GENE FAMILY</scope>
    <scope>NOMENCLATURE</scope>
    <source>
        <tissue>Pollen</tissue>
    </source>
</reference>
<reference key="2">
    <citation type="journal article" date="1999" name="Nature">
        <title>Sequence and analysis of chromosome 4 of the plant Arabidopsis thaliana.</title>
        <authorList>
            <person name="Mayer K.F.X."/>
            <person name="Schueller C."/>
            <person name="Wambutt R."/>
            <person name="Murphy G."/>
            <person name="Volckaert G."/>
            <person name="Pohl T."/>
            <person name="Duesterhoeft A."/>
            <person name="Stiekema W."/>
            <person name="Entian K.-D."/>
            <person name="Terryn N."/>
            <person name="Harris B."/>
            <person name="Ansorge W."/>
            <person name="Brandt P."/>
            <person name="Grivell L.A."/>
            <person name="Rieger M."/>
            <person name="Weichselgartner M."/>
            <person name="de Simone V."/>
            <person name="Obermaier B."/>
            <person name="Mache R."/>
            <person name="Mueller M."/>
            <person name="Kreis M."/>
            <person name="Delseny M."/>
            <person name="Puigdomenech P."/>
            <person name="Watson M."/>
            <person name="Schmidtheini T."/>
            <person name="Reichert B."/>
            <person name="Portetelle D."/>
            <person name="Perez-Alonso M."/>
            <person name="Boutry M."/>
            <person name="Bancroft I."/>
            <person name="Vos P."/>
            <person name="Hoheisel J."/>
            <person name="Zimmermann W."/>
            <person name="Wedler H."/>
            <person name="Ridley P."/>
            <person name="Langham S.-A."/>
            <person name="McCullagh B."/>
            <person name="Bilham L."/>
            <person name="Robben J."/>
            <person name="van der Schueren J."/>
            <person name="Grymonprez B."/>
            <person name="Chuang Y.-J."/>
            <person name="Vandenbussche F."/>
            <person name="Braeken M."/>
            <person name="Weltjens I."/>
            <person name="Voet M."/>
            <person name="Bastiaens I."/>
            <person name="Aert R."/>
            <person name="Defoor E."/>
            <person name="Weitzenegger T."/>
            <person name="Bothe G."/>
            <person name="Ramsperger U."/>
            <person name="Hilbert H."/>
            <person name="Braun M."/>
            <person name="Holzer E."/>
            <person name="Brandt A."/>
            <person name="Peters S."/>
            <person name="van Staveren M."/>
            <person name="Dirkse W."/>
            <person name="Mooijman P."/>
            <person name="Klein Lankhorst R."/>
            <person name="Rose M."/>
            <person name="Hauf J."/>
            <person name="Koetter P."/>
            <person name="Berneiser S."/>
            <person name="Hempel S."/>
            <person name="Feldpausch M."/>
            <person name="Lamberth S."/>
            <person name="Van den Daele H."/>
            <person name="De Keyser A."/>
            <person name="Buysshaert C."/>
            <person name="Gielen J."/>
            <person name="Villarroel R."/>
            <person name="De Clercq R."/>
            <person name="van Montagu M."/>
            <person name="Rogers J."/>
            <person name="Cronin A."/>
            <person name="Quail M.A."/>
            <person name="Bray-Allen S."/>
            <person name="Clark L."/>
            <person name="Doggett J."/>
            <person name="Hall S."/>
            <person name="Kay M."/>
            <person name="Lennard N."/>
            <person name="McLay K."/>
            <person name="Mayes R."/>
            <person name="Pettett A."/>
            <person name="Rajandream M.A."/>
            <person name="Lyne M."/>
            <person name="Benes V."/>
            <person name="Rechmann S."/>
            <person name="Borkova D."/>
            <person name="Bloecker H."/>
            <person name="Scharfe M."/>
            <person name="Grimm M."/>
            <person name="Loehnert T.-H."/>
            <person name="Dose S."/>
            <person name="de Haan M."/>
            <person name="Maarse A.C."/>
            <person name="Schaefer M."/>
            <person name="Mueller-Auer S."/>
            <person name="Gabel C."/>
            <person name="Fuchs M."/>
            <person name="Fartmann B."/>
            <person name="Granderath K."/>
            <person name="Dauner D."/>
            <person name="Herzl A."/>
            <person name="Neumann S."/>
            <person name="Argiriou A."/>
            <person name="Vitale D."/>
            <person name="Liguori R."/>
            <person name="Piravandi E."/>
            <person name="Massenet O."/>
            <person name="Quigley F."/>
            <person name="Clabauld G."/>
            <person name="Muendlein A."/>
            <person name="Felber R."/>
            <person name="Schnabl S."/>
            <person name="Hiller R."/>
            <person name="Schmidt W."/>
            <person name="Lecharny A."/>
            <person name="Aubourg S."/>
            <person name="Chefdor F."/>
            <person name="Cooke R."/>
            <person name="Berger C."/>
            <person name="Monfort A."/>
            <person name="Casacuberta E."/>
            <person name="Gibbons T."/>
            <person name="Weber N."/>
            <person name="Vandenbol M."/>
            <person name="Bargues M."/>
            <person name="Terol J."/>
            <person name="Torres A."/>
            <person name="Perez-Perez A."/>
            <person name="Purnelle B."/>
            <person name="Bent E."/>
            <person name="Johnson S."/>
            <person name="Tacon D."/>
            <person name="Jesse T."/>
            <person name="Heijnen L."/>
            <person name="Schwarz S."/>
            <person name="Scholler P."/>
            <person name="Heber S."/>
            <person name="Francs P."/>
            <person name="Bielke C."/>
            <person name="Frishman D."/>
            <person name="Haase D."/>
            <person name="Lemcke K."/>
            <person name="Mewes H.-W."/>
            <person name="Stocker S."/>
            <person name="Zaccaria P."/>
            <person name="Bevan M."/>
            <person name="Wilson R.K."/>
            <person name="de la Bastide M."/>
            <person name="Habermann K."/>
            <person name="Parnell L."/>
            <person name="Dedhia N."/>
            <person name="Gnoj L."/>
            <person name="Schutz K."/>
            <person name="Huang E."/>
            <person name="Spiegel L."/>
            <person name="Sekhon M."/>
            <person name="Murray J."/>
            <person name="Sheet P."/>
            <person name="Cordes M."/>
            <person name="Abu-Threideh J."/>
            <person name="Stoneking T."/>
            <person name="Kalicki J."/>
            <person name="Graves T."/>
            <person name="Harmon G."/>
            <person name="Edwards J."/>
            <person name="Latreille P."/>
            <person name="Courtney L."/>
            <person name="Cloud J."/>
            <person name="Abbott A."/>
            <person name="Scott K."/>
            <person name="Johnson D."/>
            <person name="Minx P."/>
            <person name="Bentley D."/>
            <person name="Fulton B."/>
            <person name="Miller N."/>
            <person name="Greco T."/>
            <person name="Kemp K."/>
            <person name="Kramer J."/>
            <person name="Fulton L."/>
            <person name="Mardis E."/>
            <person name="Dante M."/>
            <person name="Pepin K."/>
            <person name="Hillier L.W."/>
            <person name="Nelson J."/>
            <person name="Spieth J."/>
            <person name="Ryan E."/>
            <person name="Andrews S."/>
            <person name="Geisel C."/>
            <person name="Layman D."/>
            <person name="Du H."/>
            <person name="Ali J."/>
            <person name="Berghoff A."/>
            <person name="Jones K."/>
            <person name="Drone K."/>
            <person name="Cotton M."/>
            <person name="Joshu C."/>
            <person name="Antonoiu B."/>
            <person name="Zidanic M."/>
            <person name="Strong C."/>
            <person name="Sun H."/>
            <person name="Lamar B."/>
            <person name="Yordan C."/>
            <person name="Ma P."/>
            <person name="Zhong J."/>
            <person name="Preston R."/>
            <person name="Vil D."/>
            <person name="Shekher M."/>
            <person name="Matero A."/>
            <person name="Shah R."/>
            <person name="Swaby I.K."/>
            <person name="O'Shaughnessy A."/>
            <person name="Rodriguez M."/>
            <person name="Hoffman J."/>
            <person name="Till S."/>
            <person name="Granat S."/>
            <person name="Shohdy N."/>
            <person name="Hasegawa A."/>
            <person name="Hameed A."/>
            <person name="Lodhi M."/>
            <person name="Johnson A."/>
            <person name="Chen E."/>
            <person name="Marra M.A."/>
            <person name="Martienssen R."/>
            <person name="McCombie W.R."/>
        </authorList>
    </citation>
    <scope>NUCLEOTIDE SEQUENCE [LARGE SCALE GENOMIC DNA]</scope>
    <source>
        <strain>cv. Columbia</strain>
    </source>
</reference>
<reference key="3">
    <citation type="journal article" date="2017" name="Plant J.">
        <title>Araport11: a complete reannotation of the Arabidopsis thaliana reference genome.</title>
        <authorList>
            <person name="Cheng C.Y."/>
            <person name="Krishnakumar V."/>
            <person name="Chan A.P."/>
            <person name="Thibaud-Nissen F."/>
            <person name="Schobel S."/>
            <person name="Town C.D."/>
        </authorList>
    </citation>
    <scope>GENOME REANNOTATION</scope>
    <source>
        <strain>cv. Columbia</strain>
    </source>
</reference>
<reference key="4">
    <citation type="journal article" date="2001" name="Plant Physiol.">
        <title>Phylogenetic relationships within cation transporter families of Arabidopsis.</title>
        <authorList>
            <person name="Maeser P."/>
            <person name="Thomine S."/>
            <person name="Schroeder J.I."/>
            <person name="Ward J.M."/>
            <person name="Hirschi K."/>
            <person name="Sze H."/>
            <person name="Talke I.N."/>
            <person name="Amtmann A."/>
            <person name="Maathuis F.J.M."/>
            <person name="Sanders D."/>
            <person name="Harper J.F."/>
            <person name="Tchieu J."/>
            <person name="Gribskov M."/>
            <person name="Persans M.W."/>
            <person name="Salt D.E."/>
            <person name="Kim S.A."/>
            <person name="Guerinot M.L."/>
        </authorList>
    </citation>
    <scope>GENE FAMILY</scope>
    <scope>NOMENCLATURE</scope>
</reference>
<reference key="5">
    <citation type="journal article" date="2004" name="Plant J.">
        <title>Characterization of AtCHX17, a member of the cation/H+ exchangers, CHX family, from Arabidopsis thaliana suggests a role in K+ homeostasis.</title>
        <authorList>
            <person name="Cellier F."/>
            <person name="Conejero G."/>
            <person name="Ricaud L."/>
            <person name="Luu D.T."/>
            <person name="Lepetit M."/>
            <person name="Gosti F."/>
            <person name="Casse F."/>
        </authorList>
    </citation>
    <scope>FUNCTION</scope>
    <scope>DISRUPTION PHENOTYPE</scope>
    <scope>INDUCTION</scope>
</reference>
<reference key="6">
    <citation type="journal article" date="2006" name="Yeast">
        <title>Arabidopsis thaliana CHX17 gene complements the kha1 deletion phenotypes in Saccharomyces cerevisiae.</title>
        <authorList>
            <person name="Maresova L."/>
            <person name="Sychrova H."/>
        </authorList>
    </citation>
    <scope>FUNCTION</scope>
</reference>
<reference key="7">
    <citation type="journal article" date="2007" name="Biochem. Biophys. Res. Commun.">
        <title>Novel subsets of the Arabidopsis plasmalemma phosphoproteome identify phosphorylation sites in secondary active transporters.</title>
        <authorList>
            <person name="Hem S."/>
            <person name="Rofidal V."/>
            <person name="Sommerer N."/>
            <person name="Rossignol M."/>
        </authorList>
    </citation>
    <scope>PHOSPHORYLATION [LARGE SCALE ANALYSIS] AT SER-817 AND SER-819</scope>
    <scope>IDENTIFICATION BY MASS SPECTROMETRY [LARGE SCALE ANALYSIS]</scope>
</reference>
<proteinExistence type="evidence at protein level"/>
<accession>Q9SUQ7</accession>
<evidence type="ECO:0000250" key="1"/>
<evidence type="ECO:0000255" key="2"/>
<evidence type="ECO:0000269" key="3">
    <source>
    </source>
</evidence>
<evidence type="ECO:0000269" key="4">
    <source>
    </source>
</evidence>
<evidence type="ECO:0000269" key="5">
    <source>
    </source>
</evidence>
<evidence type="ECO:0000305" key="6"/>
<evidence type="ECO:0007744" key="7">
    <source>
    </source>
</evidence>
<sequence length="820" mass="89166">MGTNGTTCPGPMKATSNGVFQGENPLEHALPLLILQICIVLLLTRLLAFLLRPLRQPRVIAEIVGGILLGPSALGKSTKFINTVFPPKSLTVLDTLANLGLIFFLFLVGLELDPKSLKRTGKRALSIALAGITLPFVLGIGTSFALRSSIADGASKAPFLVFMGVALSITAFPVLARILAEIKLLTTDIGKIALSAAAVNDVAAWILLALAVALSGEGSSPLTSLWVFLSGCGFVLFCIFVVQPGIKLIAKRCPEGEPVNELYVCCTLGIVLAASFVTDFIGIHALFGAFVIGVIFPKEGNFANALVEKVEDLVSGLFLPLYFVSSGLKTNVATIQGAQSWGLLVLVIFNACFGKIIGTVLVSLYCKVPLDQSLALGFLMNTKGLVELIVLNIGKDRGVLNDQIFAIMVLMAIFTTFMTTPLVLAVYKPGKSLTKADYKNRTVEETNRSNKPLCLMFCFQSIMNIPTIVNLIEASRGINRKENLSVYAMHLMELSERSSAILMAHKVRRNGLPFWNKDKSENNSSSSDMVVVAFEAFRRLSRVSVRPMTAISPMATIHEDICQSAERKKTAMVILPFHKHVRLDRTWETTRNDYRWINKKVMEESPCSVAILVDRGLGGTTRVASSDFSLTITVLFFGGNDDREALAFAVRMAEHPGISLTVVRFIPSDEFKPENVRIEITEDQLCSGATRLIDIEAITELKAKIKEKESSRSNSDSESHIIYEEKIVKCYEEVIEVIKEYSKSNLFLVGKSPEGSVASGINVRSDTPELGPIGNLLTESESVSTVASVLVVQQYIASRPVGISKNVTTEESLVEDSESP</sequence>
<protein>
    <recommendedName>
        <fullName>Cation/H(+) antiporter 17</fullName>
    </recommendedName>
    <alternativeName>
        <fullName>Protein CATION/H+ EXCHANGER 17</fullName>
        <shortName>AtCHX17</shortName>
    </alternativeName>
</protein>
<dbReference type="EMBL" id="AY926473">
    <property type="protein sequence ID" value="AAX49545.1"/>
    <property type="molecule type" value="mRNA"/>
</dbReference>
<dbReference type="EMBL" id="AL035394">
    <property type="protein sequence ID" value="CAA23036.1"/>
    <property type="molecule type" value="Genomic_DNA"/>
</dbReference>
<dbReference type="EMBL" id="AL161559">
    <property type="protein sequence ID" value="CAB79325.1"/>
    <property type="molecule type" value="Genomic_DNA"/>
</dbReference>
<dbReference type="EMBL" id="CP002687">
    <property type="protein sequence ID" value="AEE84796.1"/>
    <property type="molecule type" value="Genomic_DNA"/>
</dbReference>
<dbReference type="EMBL" id="CP002687">
    <property type="protein sequence ID" value="ANM66834.1"/>
    <property type="molecule type" value="Genomic_DNA"/>
</dbReference>
<dbReference type="PIR" id="T05602">
    <property type="entry name" value="T05602"/>
</dbReference>
<dbReference type="RefSeq" id="NP_001328705.1">
    <property type="nucleotide sequence ID" value="NM_001341626.1"/>
</dbReference>
<dbReference type="RefSeq" id="NP_194101.1">
    <property type="nucleotide sequence ID" value="NM_118501.5"/>
</dbReference>
<dbReference type="SMR" id="Q9SUQ7"/>
<dbReference type="BioGRID" id="13759">
    <property type="interactions" value="3"/>
</dbReference>
<dbReference type="FunCoup" id="Q9SUQ7">
    <property type="interactions" value="122"/>
</dbReference>
<dbReference type="STRING" id="3702.Q9SUQ7"/>
<dbReference type="TCDB" id="2.A.37.4.2">
    <property type="family name" value="the monovalent cation:proton antiporter-2 (cpa2) family"/>
</dbReference>
<dbReference type="iPTMnet" id="Q9SUQ7"/>
<dbReference type="PaxDb" id="3702-AT4G23700.1"/>
<dbReference type="ProteomicsDB" id="246917"/>
<dbReference type="EnsemblPlants" id="AT4G23700.1">
    <property type="protein sequence ID" value="AT4G23700.1"/>
    <property type="gene ID" value="AT4G23700"/>
</dbReference>
<dbReference type="EnsemblPlants" id="AT4G23700.2">
    <property type="protein sequence ID" value="AT4G23700.2"/>
    <property type="gene ID" value="AT4G23700"/>
</dbReference>
<dbReference type="GeneID" id="828470"/>
<dbReference type="Gramene" id="AT4G23700.1">
    <property type="protein sequence ID" value="AT4G23700.1"/>
    <property type="gene ID" value="AT4G23700"/>
</dbReference>
<dbReference type="Gramene" id="AT4G23700.2">
    <property type="protein sequence ID" value="AT4G23700.2"/>
    <property type="gene ID" value="AT4G23700"/>
</dbReference>
<dbReference type="KEGG" id="ath:AT4G23700"/>
<dbReference type="Araport" id="AT4G23700"/>
<dbReference type="TAIR" id="AT4G23700">
    <property type="gene designation" value="CHX17"/>
</dbReference>
<dbReference type="eggNOG" id="KOG1650">
    <property type="taxonomic scope" value="Eukaryota"/>
</dbReference>
<dbReference type="HOGENOM" id="CLU_005126_6_2_1"/>
<dbReference type="InParanoid" id="Q9SUQ7"/>
<dbReference type="OMA" id="CTFIVPP"/>
<dbReference type="PhylomeDB" id="Q9SUQ7"/>
<dbReference type="PRO" id="PR:Q9SUQ7"/>
<dbReference type="Proteomes" id="UP000006548">
    <property type="component" value="Chromosome 4"/>
</dbReference>
<dbReference type="ExpressionAtlas" id="Q9SUQ7">
    <property type="expression patterns" value="baseline and differential"/>
</dbReference>
<dbReference type="GO" id="GO:0005770">
    <property type="term" value="C:late endosome"/>
    <property type="evidence" value="ECO:0000314"/>
    <property type="project" value="TAIR"/>
</dbReference>
<dbReference type="GO" id="GO:0016020">
    <property type="term" value="C:membrane"/>
    <property type="evidence" value="ECO:0007669"/>
    <property type="project" value="UniProtKB-SubCell"/>
</dbReference>
<dbReference type="GO" id="GO:0015297">
    <property type="term" value="F:antiporter activity"/>
    <property type="evidence" value="ECO:0007669"/>
    <property type="project" value="UniProtKB-KW"/>
</dbReference>
<dbReference type="GO" id="GO:0006813">
    <property type="term" value="P:potassium ion transport"/>
    <property type="evidence" value="ECO:0007669"/>
    <property type="project" value="UniProtKB-KW"/>
</dbReference>
<dbReference type="GO" id="GO:0006623">
    <property type="term" value="P:protein targeting to vacuole"/>
    <property type="evidence" value="ECO:0000315"/>
    <property type="project" value="TAIR"/>
</dbReference>
<dbReference type="GO" id="GO:1902600">
    <property type="term" value="P:proton transmembrane transport"/>
    <property type="evidence" value="ECO:0007669"/>
    <property type="project" value="InterPro"/>
</dbReference>
<dbReference type="GO" id="GO:0006885">
    <property type="term" value="P:regulation of pH"/>
    <property type="evidence" value="ECO:0000315"/>
    <property type="project" value="TAIR"/>
</dbReference>
<dbReference type="FunFam" id="1.20.1530.20:FF:000003">
    <property type="entry name" value="Cation/H(+) antiporter 15"/>
    <property type="match status" value="1"/>
</dbReference>
<dbReference type="Gene3D" id="1.20.1530.20">
    <property type="match status" value="1"/>
</dbReference>
<dbReference type="InterPro" id="IPR006153">
    <property type="entry name" value="Cation/H_exchanger_TM"/>
</dbReference>
<dbReference type="InterPro" id="IPR050794">
    <property type="entry name" value="CPA2_transporter"/>
</dbReference>
<dbReference type="InterPro" id="IPR038770">
    <property type="entry name" value="Na+/solute_symporter_sf"/>
</dbReference>
<dbReference type="PANTHER" id="PTHR32468">
    <property type="entry name" value="CATION/H + ANTIPORTER"/>
    <property type="match status" value="1"/>
</dbReference>
<dbReference type="PANTHER" id="PTHR32468:SF144">
    <property type="entry name" value="CATION_H(+) ANTIPORTER 17"/>
    <property type="match status" value="1"/>
</dbReference>
<dbReference type="Pfam" id="PF23256">
    <property type="entry name" value="CHX17_2nd"/>
    <property type="match status" value="1"/>
</dbReference>
<dbReference type="Pfam" id="PF23259">
    <property type="entry name" value="CHX17_C"/>
    <property type="match status" value="1"/>
</dbReference>
<dbReference type="Pfam" id="PF00999">
    <property type="entry name" value="Na_H_Exchanger"/>
    <property type="match status" value="1"/>
</dbReference>
<feature type="chain" id="PRO_0000394987" description="Cation/H(+) antiporter 17">
    <location>
        <begin position="1"/>
        <end position="820"/>
    </location>
</feature>
<feature type="transmembrane region" description="Helical" evidence="2">
    <location>
        <begin position="30"/>
        <end position="50"/>
    </location>
</feature>
<feature type="transmembrane region" description="Helical" evidence="2">
    <location>
        <begin position="58"/>
        <end position="75"/>
    </location>
</feature>
<feature type="transmembrane region" description="Helical" evidence="2">
    <location>
        <begin position="90"/>
        <end position="110"/>
    </location>
</feature>
<feature type="transmembrane region" description="Helical" evidence="2">
    <location>
        <begin position="124"/>
        <end position="144"/>
    </location>
</feature>
<feature type="transmembrane region" description="Helical" evidence="2">
    <location>
        <begin position="159"/>
        <end position="179"/>
    </location>
</feature>
<feature type="transmembrane region" description="Helical" evidence="2">
    <location>
        <begin position="192"/>
        <end position="212"/>
    </location>
</feature>
<feature type="transmembrane region" description="Helical" evidence="2">
    <location>
        <begin position="222"/>
        <end position="242"/>
    </location>
</feature>
<feature type="transmembrane region" description="Helical" evidence="2">
    <location>
        <begin position="276"/>
        <end position="296"/>
    </location>
</feature>
<feature type="transmembrane region" description="Helical" evidence="2">
    <location>
        <begin position="313"/>
        <end position="333"/>
    </location>
</feature>
<feature type="transmembrane region" description="Helical" evidence="2">
    <location>
        <begin position="342"/>
        <end position="362"/>
    </location>
</feature>
<feature type="transmembrane region" description="Helical" evidence="2">
    <location>
        <begin position="374"/>
        <end position="394"/>
    </location>
</feature>
<feature type="transmembrane region" description="Helical" evidence="2">
    <location>
        <begin position="404"/>
        <end position="424"/>
    </location>
</feature>
<feature type="modified residue" description="Phosphoserine" evidence="7">
    <location>
        <position position="817"/>
    </location>
</feature>
<feature type="modified residue" description="Phosphoserine" evidence="7">
    <location>
        <position position="819"/>
    </location>
</feature>